<accession>W0RYD3</accession>
<accession>Q0JQ65</accession>
<accession>Q5VRT8</accession>
<gene>
    <name evidence="5" type="primary">SSG4</name>
    <name evidence="8" type="ordered locus">Os01g0179400</name>
    <name evidence="6" type="ordered locus">LOC_Os01g08420</name>
    <name evidence="7" type="ORF">P0406H10.19</name>
</gene>
<dbReference type="EMBL" id="AB856288">
    <property type="protein sequence ID" value="BAO23504.1"/>
    <property type="molecule type" value="mRNA"/>
</dbReference>
<dbReference type="EMBL" id="AP002524">
    <property type="protein sequence ID" value="BAD67835.1"/>
    <property type="status" value="ALT_SEQ"/>
    <property type="molecule type" value="Genomic_DNA"/>
</dbReference>
<dbReference type="EMBL" id="AP008207">
    <property type="protein sequence ID" value="BAF04113.2"/>
    <property type="status" value="ALT_SEQ"/>
    <property type="molecule type" value="Genomic_DNA"/>
</dbReference>
<dbReference type="EMBL" id="AP014957">
    <property type="protein sequence ID" value="BAS70711.1"/>
    <property type="molecule type" value="Genomic_DNA"/>
</dbReference>
<dbReference type="EMBL" id="AK063507">
    <property type="protein sequence ID" value="BAG88743.1"/>
    <property type="status" value="ALT_INIT"/>
    <property type="molecule type" value="mRNA"/>
</dbReference>
<dbReference type="FunCoup" id="W0RYD3">
    <property type="interactions" value="1230"/>
</dbReference>
<dbReference type="STRING" id="39947.W0RYD3"/>
<dbReference type="PaxDb" id="39947-W0RYD3"/>
<dbReference type="EnsemblPlants" id="Os01t0179400-01">
    <property type="protein sequence ID" value="Os01t0179400-01"/>
    <property type="gene ID" value="Os01g0179400"/>
</dbReference>
<dbReference type="GeneID" id="4323878"/>
<dbReference type="Gramene" id="Os01t0179400-01">
    <property type="protein sequence ID" value="Os01t0179400-01"/>
    <property type="gene ID" value="Os01g0179400"/>
</dbReference>
<dbReference type="KEGG" id="dosa:Os01g0179400"/>
<dbReference type="KEGG" id="osa:4323878"/>
<dbReference type="eggNOG" id="ENOG502QTMX">
    <property type="taxonomic scope" value="Eukaryota"/>
</dbReference>
<dbReference type="HOGENOM" id="CLU_006278_0_0_1"/>
<dbReference type="InParanoid" id="W0RYD3"/>
<dbReference type="OrthoDB" id="1386367at2759"/>
<dbReference type="Proteomes" id="UP000000763">
    <property type="component" value="Chromosome 1"/>
</dbReference>
<dbReference type="Proteomes" id="UP000059680">
    <property type="component" value="Chromosome 1"/>
</dbReference>
<dbReference type="GO" id="GO:0009501">
    <property type="term" value="C:amyloplast"/>
    <property type="evidence" value="ECO:0000314"/>
    <property type="project" value="UniProtKB"/>
</dbReference>
<dbReference type="GO" id="GO:0009706">
    <property type="term" value="C:chloroplast inner membrane"/>
    <property type="evidence" value="ECO:0007669"/>
    <property type="project" value="UniProtKB-SubCell"/>
</dbReference>
<dbReference type="GO" id="GO:0031972">
    <property type="term" value="C:chloroplast intermembrane space"/>
    <property type="evidence" value="ECO:0007669"/>
    <property type="project" value="UniProtKB-SubCell"/>
</dbReference>
<dbReference type="GO" id="GO:0005886">
    <property type="term" value="C:plasma membrane"/>
    <property type="evidence" value="ECO:0007669"/>
    <property type="project" value="InterPro"/>
</dbReference>
<dbReference type="GO" id="GO:0009660">
    <property type="term" value="P:amyloplast organization"/>
    <property type="evidence" value="ECO:0000315"/>
    <property type="project" value="UniProtKB"/>
</dbReference>
<dbReference type="GO" id="GO:0009306">
    <property type="term" value="P:protein secretion"/>
    <property type="evidence" value="ECO:0007669"/>
    <property type="project" value="InterPro"/>
</dbReference>
<dbReference type="InterPro" id="IPR053022">
    <property type="entry name" value="Chloroplast_translocon_comp"/>
</dbReference>
<dbReference type="InterPro" id="IPR007452">
    <property type="entry name" value="TamB"/>
</dbReference>
<dbReference type="PANTHER" id="PTHR34457">
    <property type="entry name" value="EMBRYO DEFECTIVE 2410"/>
    <property type="match status" value="1"/>
</dbReference>
<dbReference type="PANTHER" id="PTHR34457:SF3">
    <property type="entry name" value="PROTEIN TIC236, CHLOROPLASTIC"/>
    <property type="match status" value="1"/>
</dbReference>
<dbReference type="Pfam" id="PF04357">
    <property type="entry name" value="TamB"/>
    <property type="match status" value="1"/>
</dbReference>
<proteinExistence type="evidence at protein level"/>
<evidence type="ECO:0000250" key="1">
    <source>
        <dbReference type="UniProtKB" id="F4ISL7"/>
    </source>
</evidence>
<evidence type="ECO:0000255" key="2"/>
<evidence type="ECO:0000256" key="3">
    <source>
        <dbReference type="SAM" id="MobiDB-lite"/>
    </source>
</evidence>
<evidence type="ECO:0000269" key="4">
    <source>
    </source>
</evidence>
<evidence type="ECO:0000303" key="5">
    <source>
    </source>
</evidence>
<evidence type="ECO:0000305" key="6"/>
<evidence type="ECO:0000312" key="7">
    <source>
        <dbReference type="EMBL" id="BAD67835.1"/>
    </source>
</evidence>
<evidence type="ECO:0000312" key="8">
    <source>
        <dbReference type="EMBL" id="BAS70711.1"/>
    </source>
</evidence>
<name>SSG4_ORYSJ</name>
<comment type="function">
    <text evidence="1 4">Part of the inner chloroplast membrane translocon complex (TIC) which associates with the outer chloroplast membrane translocon complex (TOC) and forms a supercomplex involved in protein precursor import into the chloroplast stroma (By similarity). Required for the regulation of starch granule size in amyloplasts (PubMed:24335509).</text>
</comment>
<comment type="subunit">
    <text evidence="1">Part of the TIC complex, which can interact with components of the TOC complex to form a larger import complex.</text>
</comment>
<comment type="subcellular location">
    <subcellularLocation>
        <location evidence="1">Plastid</location>
        <location evidence="1">Chloroplast inner membrane</location>
        <topology evidence="2">Single-pass membrane protein</topology>
    </subcellularLocation>
    <subcellularLocation>
        <location evidence="1">Plastid</location>
        <location evidence="1">Chloroplast intermembrane space</location>
    </subcellularLocation>
    <subcellularLocation>
        <location evidence="4">Plastid</location>
        <location evidence="4">Chloroplast</location>
    </subcellularLocation>
    <subcellularLocation>
        <location evidence="4">Plastid</location>
        <location evidence="4">Amyloplast</location>
    </subcellularLocation>
</comment>
<comment type="tissue specificity">
    <text evidence="4">Highly expressed in third leaf and developing seeds (PubMed:24335509). Expressed in anthers, pistils, flag leaves and young panicles (PubMed:24335509).</text>
</comment>
<comment type="similarity">
    <text evidence="6">Belongs to the TamB family.</text>
</comment>
<comment type="sequence caution" evidence="6">
    <conflict type="erroneous gene model prediction">
        <sequence resource="EMBL-CDS" id="BAD67835"/>
    </conflict>
</comment>
<comment type="sequence caution" evidence="6">
    <conflict type="erroneous gene model prediction">
        <sequence resource="EMBL-CDS" id="BAF04113"/>
    </conflict>
</comment>
<comment type="sequence caution" evidence="6">
    <conflict type="erroneous initiation">
        <sequence resource="EMBL-CDS" id="BAG88743"/>
    </conflict>
    <text>Truncated N-terminus.</text>
</comment>
<organism>
    <name type="scientific">Oryza sativa subsp. japonica</name>
    <name type="common">Rice</name>
    <dbReference type="NCBI Taxonomy" id="39947"/>
    <lineage>
        <taxon>Eukaryota</taxon>
        <taxon>Viridiplantae</taxon>
        <taxon>Streptophyta</taxon>
        <taxon>Embryophyta</taxon>
        <taxon>Tracheophyta</taxon>
        <taxon>Spermatophyta</taxon>
        <taxon>Magnoliopsida</taxon>
        <taxon>Liliopsida</taxon>
        <taxon>Poales</taxon>
        <taxon>Poaceae</taxon>
        <taxon>BOP clade</taxon>
        <taxon>Oryzoideae</taxon>
        <taxon>Oryzeae</taxon>
        <taxon>Oryzinae</taxon>
        <taxon>Oryza</taxon>
        <taxon>Oryza sativa</taxon>
    </lineage>
</organism>
<protein>
    <recommendedName>
        <fullName evidence="5">Protein SUBSTANDARD STARCH GRAIN 4, chloroplastic</fullName>
    </recommendedName>
    <alternativeName>
        <fullName evidence="6">Translocon at the inner-envelope- membrane of chloroplasts SSG4</fullName>
    </alternativeName>
</protein>
<feature type="transit peptide" description="Chloroplast" evidence="2">
    <location>
        <begin position="1"/>
        <end position="42"/>
    </location>
</feature>
<feature type="chain" id="PRO_0000447405" description="Protein SUBSTANDARD STARCH GRAIN 4, chloroplastic">
    <location>
        <begin position="43"/>
        <end position="2135"/>
    </location>
</feature>
<feature type="topological domain" description="Stromal" evidence="1">
    <location>
        <begin position="43"/>
        <end position="104"/>
    </location>
</feature>
<feature type="transmembrane region" description="Helical" evidence="2">
    <location>
        <begin position="105"/>
        <end position="125"/>
    </location>
</feature>
<feature type="topological domain" description="Chloroplast intermembrane" evidence="1">
    <location>
        <begin position="126"/>
        <end position="2135"/>
    </location>
</feature>
<feature type="region of interest" description="Disordered" evidence="3">
    <location>
        <begin position="1"/>
        <end position="44"/>
    </location>
</feature>
<feature type="region of interest" description="Disordered" evidence="3">
    <location>
        <begin position="58"/>
        <end position="89"/>
    </location>
</feature>
<feature type="region of interest" description="Disordered" evidence="3">
    <location>
        <begin position="361"/>
        <end position="382"/>
    </location>
</feature>
<feature type="region of interest" description="Disordered" evidence="3">
    <location>
        <begin position="401"/>
        <end position="492"/>
    </location>
</feature>
<feature type="region of interest" description="Disordered" evidence="3">
    <location>
        <begin position="1843"/>
        <end position="1869"/>
    </location>
</feature>
<feature type="compositionally biased region" description="Low complexity" evidence="3">
    <location>
        <begin position="1"/>
        <end position="10"/>
    </location>
</feature>
<feature type="compositionally biased region" description="Low complexity" evidence="3">
    <location>
        <begin position="72"/>
        <end position="84"/>
    </location>
</feature>
<feature type="compositionally biased region" description="Basic residues" evidence="3">
    <location>
        <begin position="361"/>
        <end position="370"/>
    </location>
</feature>
<feature type="compositionally biased region" description="Polar residues" evidence="3">
    <location>
        <begin position="373"/>
        <end position="382"/>
    </location>
</feature>
<feature type="compositionally biased region" description="Polar residues" evidence="3">
    <location>
        <begin position="454"/>
        <end position="490"/>
    </location>
</feature>
<feature type="compositionally biased region" description="Polar residues" evidence="3">
    <location>
        <begin position="1846"/>
        <end position="1856"/>
    </location>
</feature>
<feature type="compositionally biased region" description="Basic and acidic residues" evidence="3">
    <location>
        <begin position="1857"/>
        <end position="1866"/>
    </location>
</feature>
<feature type="mutagenesis site" description="In ssg4; chalky grain with enlarged starch grains in endosperm, but reduced amount of starch in seeds; variegated leaves with increased size of chloroplasts." evidence="4">
    <original>G</original>
    <variation>S</variation>
    <location>
        <position position="1924"/>
    </location>
</feature>
<keyword id="KW-0035">Amyloplast</keyword>
<keyword id="KW-0150">Chloroplast</keyword>
<keyword id="KW-0472">Membrane</keyword>
<keyword id="KW-0934">Plastid</keyword>
<keyword id="KW-1001">Plastid inner membrane</keyword>
<keyword id="KW-0653">Protein transport</keyword>
<keyword id="KW-1185">Reference proteome</keyword>
<keyword id="KW-0809">Transit peptide</keyword>
<keyword id="KW-0812">Transmembrane</keyword>
<keyword id="KW-1133">Transmembrane helix</keyword>
<keyword id="KW-0813">Transport</keyword>
<sequence length="2135" mass="235113">MSHCLRASPFLSPPPPLLHPSRRRRHRQGGCIHTSPGTRPLVARARFDPPPLLRLKVSDSSDCPAPHHPHSQHQPLLPTRRQQQQPPPPYQALVASLAPLWREGLFLVRCSVFAAALSVAAALSWYAQLRARSFVESRLLPAACAALGEFLQREVHLGRVRSVSPLGITLHTCSIGPHAEEFSCAEVPVMKIRVRPFASLRRGRVVVDAVLSEPSALVAQRKDFSWLGLPAPSEGSPKRHSGEEGIDYRTKTRRLAREKAAEQWNEERDKAAREAAEMGYIVPSAQSISPSIDEMMEDDGPVDTGKSSPHLCPDEMHRKDHHIDAGIDSSSKHADLEKSFGVKARIPGISFWSRMIPNPSRRRYRRKAHSKLISDTDNSSQQRILRRSAYAAVAYFQNECSGNPDDSLPGPGESSSDGGHTNGGGEEGSPNDGPTEYSETTSMDYGELPPEKSNFASTMLIGNTDVLNGSSHNQQPSQISSHSWENNEQVSEAPVLKKRKNISEDDYRQEFDFGAFGSCTYAHNWLSFWPFQLKGFPVGFNAPSASLNVQIQKLRSLFAIGPGDNSAELSQGVGQIHPGAVQQTLPITLDSVYFNGGNLMLLGYGDQEPREMKHANGHIKFKNSYNRVHVHVTGNCMEWRQDRTSQGGGYLSTDVFVDIAEQTWHANLNVVNAFAPLFERILEIPVVWNKGRATGEVHLCMSKGDSFPSIHGQLDVKGLAFQILDAPSSFSDIVATLSFRGQRVFLHNASGWFGDAPVEASGDFGLNPEDGEFHLMCQVPSVEVNALMKTMKMRPLMFPLAGAVTAVFNCQGPLDAPVFVGSGIVSRKSLSVSGMLPSAASEAVMQNKESGAVAAFDHIPFTHVSANFTFNLDNCVADLYGIRACLLDGGEIRGAGNVWICPEGEGDDSAMDINLSGSILLDKVLHRYIPGGIQLIPLKIGELNGETRLSGSLIRPKFDIKWAAPNAEDSFSDARGNIVIAHDYIMVNSSSVSFDLNTHIQTSYIDDYLLHKEMYQRKKIMPLIVEGVDLDLRMRGFEFAHIASSIPFDSPRPLHLKASGRFKFQGKVVKYSQLVDEKNHGAIQGTIDQSKLENDVSRLVGEISLSGIKLNQLMLAPQSTGFLSISPDSIMLNATGRPDENFSIEVNVPLFFGTHEAIQDGRLLSIFLQKGQLRSNICYHPENLTSLEVRNLPLDELEFASLRGFVQKAELQLNFQKRRGHGLLSVIRPKFSGMLGESLDIAARWSGDVITMEKSVLEQANSKYELQGEYVFPGTRDRFPMESQSNGFIEKAMGGHLGSMMSSMGRWRMRLEVPGAEVAEMLPLARLLSRSTDPAIRSRSKELFMQTLHSVGFNAESLRDQLKALEMYPDWLDDDTIEDITLPGLAELRGYWRGSLDASGGGNGDTMADFDFNGEDWEWGTYKTQRVLASGSFSNNDGLRLDKLFIQKDNATLHADGSILGPLTNLHFAVLNFPVGLIPALVQAIESSTTDSIHFLRQWLTPIKGILHMEGDLRGTLAKPECDVQIRLLDGTIGGIDLGRAEVLASVTPTSRFVFDANFEPTIQSGHVNIQGSVPVTYVDSNSIEEDLEGGDGKQGIIRIPVWAKDRGLTNDISETRIMRDKPDEGWEFQLAESLKGLSWNMLEPGEVRINADIKDGGMTLITALSPYSNWLQGYAEVLLQVKGTVDHPVVDGSASFHRATVASPFLRTPLTNFAGNVHVISNRLCISSMESRVGRKGRLSMKGTLPLHNIEPSANDKIELKCEVLDIRAKNILSGQVDSQLQVTGSILRPDVSGMIRLSHGEAYLPHDKGNGAVATRLSSNKSISVPAGFDQRTVSRDVSHFLGSLSTSPDGQQSETERTPEHGSFKPNIDARLNDLKLTFGPELRIVYPLILNFAVSGDLELNGMVHPKYIRPKGVLTFENGEVNLVATQVRLKNDHLNVAKFEPDLGLDPILDLVLVGSEWQFKIQSRASMWQDNLVVTSTRSVDQDVLSPSEAAKVFESQLAESLLEGDGQLAFKKLATATLETLMPRIEGKGEFGQARWRLVYAPQIPSLLSVDPTVDPLKSLANNISFATEVEVQLGKRLQASVVRQMKDSEMAMQWSLIYQLTSRLRVLFQSTPSNRLLFEYSATSQG</sequence>
<reference key="1">
    <citation type="journal article" date="2014" name="Plant Physiol.">
        <title>Amyloplast-localized SUBSTANDARD STARCH GRAIN4 protein influences the size of starch grains in rice endosperm.</title>
        <authorList>
            <person name="Matsushima R."/>
            <person name="Maekawa M."/>
            <person name="Kusano M."/>
            <person name="Kondo H."/>
            <person name="Fujita N."/>
            <person name="Kawagoe Y."/>
            <person name="Sakamoto W."/>
        </authorList>
    </citation>
    <scope>NUCLEOTIDE SEQUENCE [MRNA]</scope>
    <scope>FUNCTION</scope>
    <scope>SUBCELLULAR LOCATION</scope>
    <scope>TISSUE SPECIFICITY</scope>
    <scope>MUTAGENESIS OF GLY-1924</scope>
</reference>
<reference key="2">
    <citation type="journal article" date="2002" name="Nature">
        <title>The genome sequence and structure of rice chromosome 1.</title>
        <authorList>
            <person name="Sasaki T."/>
            <person name="Matsumoto T."/>
            <person name="Yamamoto K."/>
            <person name="Sakata K."/>
            <person name="Baba T."/>
            <person name="Katayose Y."/>
            <person name="Wu J."/>
            <person name="Niimura Y."/>
            <person name="Cheng Z."/>
            <person name="Nagamura Y."/>
            <person name="Antonio B.A."/>
            <person name="Kanamori H."/>
            <person name="Hosokawa S."/>
            <person name="Masukawa M."/>
            <person name="Arikawa K."/>
            <person name="Chiden Y."/>
            <person name="Hayashi M."/>
            <person name="Okamoto M."/>
            <person name="Ando T."/>
            <person name="Aoki H."/>
            <person name="Arita K."/>
            <person name="Hamada M."/>
            <person name="Harada C."/>
            <person name="Hijishita S."/>
            <person name="Honda M."/>
            <person name="Ichikawa Y."/>
            <person name="Idonuma A."/>
            <person name="Iijima M."/>
            <person name="Ikeda M."/>
            <person name="Ikeno M."/>
            <person name="Ito S."/>
            <person name="Ito T."/>
            <person name="Ito Y."/>
            <person name="Ito Y."/>
            <person name="Iwabuchi A."/>
            <person name="Kamiya K."/>
            <person name="Karasawa W."/>
            <person name="Katagiri S."/>
            <person name="Kikuta A."/>
            <person name="Kobayashi N."/>
            <person name="Kono I."/>
            <person name="Machita K."/>
            <person name="Maehara T."/>
            <person name="Mizuno H."/>
            <person name="Mizubayashi T."/>
            <person name="Mukai Y."/>
            <person name="Nagasaki H."/>
            <person name="Nakashima M."/>
            <person name="Nakama Y."/>
            <person name="Nakamichi Y."/>
            <person name="Nakamura M."/>
            <person name="Namiki N."/>
            <person name="Negishi M."/>
            <person name="Ohta I."/>
            <person name="Ono N."/>
            <person name="Saji S."/>
            <person name="Sakai K."/>
            <person name="Shibata M."/>
            <person name="Shimokawa T."/>
            <person name="Shomura A."/>
            <person name="Song J."/>
            <person name="Takazaki Y."/>
            <person name="Terasawa K."/>
            <person name="Tsuji K."/>
            <person name="Waki K."/>
            <person name="Yamagata H."/>
            <person name="Yamane H."/>
            <person name="Yoshiki S."/>
            <person name="Yoshihara R."/>
            <person name="Yukawa K."/>
            <person name="Zhong H."/>
            <person name="Iwama H."/>
            <person name="Endo T."/>
            <person name="Ito H."/>
            <person name="Hahn J.H."/>
            <person name="Kim H.-I."/>
            <person name="Eun M.-Y."/>
            <person name="Yano M."/>
            <person name="Jiang J."/>
            <person name="Gojobori T."/>
        </authorList>
    </citation>
    <scope>NUCLEOTIDE SEQUENCE [LARGE SCALE GENOMIC DNA]</scope>
    <source>
        <strain>cv. Nipponbare</strain>
    </source>
</reference>
<reference key="3">
    <citation type="journal article" date="2005" name="Nature">
        <title>The map-based sequence of the rice genome.</title>
        <authorList>
            <consortium name="International rice genome sequencing project (IRGSP)"/>
        </authorList>
    </citation>
    <scope>NUCLEOTIDE SEQUENCE [LARGE SCALE GENOMIC DNA]</scope>
    <source>
        <strain>cv. Nipponbare</strain>
    </source>
</reference>
<reference key="4">
    <citation type="journal article" date="2008" name="Nucleic Acids Res.">
        <title>The rice annotation project database (RAP-DB): 2008 update.</title>
        <authorList>
            <consortium name="The rice annotation project (RAP)"/>
        </authorList>
    </citation>
    <scope>GENOME REANNOTATION</scope>
    <source>
        <strain>cv. Nipponbare</strain>
    </source>
</reference>
<reference key="5">
    <citation type="journal article" date="2013" name="Rice">
        <title>Improvement of the Oryza sativa Nipponbare reference genome using next generation sequence and optical map data.</title>
        <authorList>
            <person name="Kawahara Y."/>
            <person name="de la Bastide M."/>
            <person name="Hamilton J.P."/>
            <person name="Kanamori H."/>
            <person name="McCombie W.R."/>
            <person name="Ouyang S."/>
            <person name="Schwartz D.C."/>
            <person name="Tanaka T."/>
            <person name="Wu J."/>
            <person name="Zhou S."/>
            <person name="Childs K.L."/>
            <person name="Davidson R.M."/>
            <person name="Lin H."/>
            <person name="Quesada-Ocampo L."/>
            <person name="Vaillancourt B."/>
            <person name="Sakai H."/>
            <person name="Lee S.S."/>
            <person name="Kim J."/>
            <person name="Numa H."/>
            <person name="Itoh T."/>
            <person name="Buell C.R."/>
            <person name="Matsumoto T."/>
        </authorList>
    </citation>
    <scope>GENOME REANNOTATION</scope>
    <source>
        <strain>cv. Nipponbare</strain>
    </source>
</reference>
<reference key="6">
    <citation type="journal article" date="2003" name="Science">
        <title>Collection, mapping, and annotation of over 28,000 cDNA clones from japonica rice.</title>
        <authorList>
            <consortium name="The rice full-length cDNA consortium"/>
        </authorList>
    </citation>
    <scope>NUCLEOTIDE SEQUENCE [LARGE SCALE MRNA] OF 1107-2135</scope>
    <source>
        <strain>cv. Nipponbare</strain>
    </source>
</reference>